<reference key="1">
    <citation type="journal article" date="2009" name="PLoS Genet.">
        <title>Organised genome dynamics in the Escherichia coli species results in highly diverse adaptive paths.</title>
        <authorList>
            <person name="Touchon M."/>
            <person name="Hoede C."/>
            <person name="Tenaillon O."/>
            <person name="Barbe V."/>
            <person name="Baeriswyl S."/>
            <person name="Bidet P."/>
            <person name="Bingen E."/>
            <person name="Bonacorsi S."/>
            <person name="Bouchier C."/>
            <person name="Bouvet O."/>
            <person name="Calteau A."/>
            <person name="Chiapello H."/>
            <person name="Clermont O."/>
            <person name="Cruveiller S."/>
            <person name="Danchin A."/>
            <person name="Diard M."/>
            <person name="Dossat C."/>
            <person name="Karoui M.E."/>
            <person name="Frapy E."/>
            <person name="Garry L."/>
            <person name="Ghigo J.M."/>
            <person name="Gilles A.M."/>
            <person name="Johnson J."/>
            <person name="Le Bouguenec C."/>
            <person name="Lescat M."/>
            <person name="Mangenot S."/>
            <person name="Martinez-Jehanne V."/>
            <person name="Matic I."/>
            <person name="Nassif X."/>
            <person name="Oztas S."/>
            <person name="Petit M.A."/>
            <person name="Pichon C."/>
            <person name="Rouy Z."/>
            <person name="Ruf C.S."/>
            <person name="Schneider D."/>
            <person name="Tourret J."/>
            <person name="Vacherie B."/>
            <person name="Vallenet D."/>
            <person name="Medigue C."/>
            <person name="Rocha E.P.C."/>
            <person name="Denamur E."/>
        </authorList>
    </citation>
    <scope>NUCLEOTIDE SEQUENCE [LARGE SCALE GENOMIC DNA]</scope>
    <source>
        <strain>S88 / ExPEC</strain>
    </source>
</reference>
<proteinExistence type="inferred from homology"/>
<gene>
    <name evidence="1" type="primary">yejK</name>
    <name type="ordered locus">ECS88_2335</name>
</gene>
<name>NDPA_ECO45</name>
<protein>
    <recommendedName>
        <fullName evidence="1">Nucleoid-associated protein YejK</fullName>
    </recommendedName>
</protein>
<sequence>MSLDINQIALHQLIKRDEQNLELVLRDSLLEPTETVVEMVAELHRVYSAKNKAYGLFSEESELAQTLRLQRQGEEDFLAFSRAATGRLRDELAKYPFADGGFVLFCHYRYLAVEYLLVAVLSNLSSMRVNENLDINPTHYLDINHADIVARIDLTEWETNPESTRYLTFLKGRVGRKVADFFMDFLGASEGLNAKAQNRGLLQAVDDFTAEAQLDKAERQNVRQQVYSYCNEQLQAGEEIELESLSKELAGVSEVSFTEFAAEKGYELEESFPADRSTLRQLTKFAGSGGGLTINFDAMLLGERIFWDPATDTLTIKGTPPNLRDQLQRRTSGGN</sequence>
<organism>
    <name type="scientific">Escherichia coli O45:K1 (strain S88 / ExPEC)</name>
    <dbReference type="NCBI Taxonomy" id="585035"/>
    <lineage>
        <taxon>Bacteria</taxon>
        <taxon>Pseudomonadati</taxon>
        <taxon>Pseudomonadota</taxon>
        <taxon>Gammaproteobacteria</taxon>
        <taxon>Enterobacterales</taxon>
        <taxon>Enterobacteriaceae</taxon>
        <taxon>Escherichia</taxon>
    </lineage>
</organism>
<keyword id="KW-0963">Cytoplasm</keyword>
<keyword id="KW-1185">Reference proteome</keyword>
<accession>B7MFA1</accession>
<feature type="chain" id="PRO_1000191560" description="Nucleoid-associated protein YejK">
    <location>
        <begin position="1"/>
        <end position="335"/>
    </location>
</feature>
<comment type="subcellular location">
    <subcellularLocation>
        <location evidence="1">Cytoplasm</location>
        <location evidence="1">Nucleoid</location>
    </subcellularLocation>
</comment>
<comment type="similarity">
    <text evidence="1">Belongs to the YejK family.</text>
</comment>
<dbReference type="EMBL" id="CU928161">
    <property type="protein sequence ID" value="CAR03617.1"/>
    <property type="molecule type" value="Genomic_DNA"/>
</dbReference>
<dbReference type="RefSeq" id="WP_000050789.1">
    <property type="nucleotide sequence ID" value="NC_011742.1"/>
</dbReference>
<dbReference type="SMR" id="B7MFA1"/>
<dbReference type="GeneID" id="75206440"/>
<dbReference type="KEGG" id="ecz:ECS88_2335"/>
<dbReference type="HOGENOM" id="CLU_063050_0_1_6"/>
<dbReference type="Proteomes" id="UP000000747">
    <property type="component" value="Chromosome"/>
</dbReference>
<dbReference type="GO" id="GO:0043590">
    <property type="term" value="C:bacterial nucleoid"/>
    <property type="evidence" value="ECO:0007669"/>
    <property type="project" value="TreeGrafter"/>
</dbReference>
<dbReference type="GO" id="GO:0005737">
    <property type="term" value="C:cytoplasm"/>
    <property type="evidence" value="ECO:0007669"/>
    <property type="project" value="UniProtKB-UniRule"/>
</dbReference>
<dbReference type="GO" id="GO:0003690">
    <property type="term" value="F:double-stranded DNA binding"/>
    <property type="evidence" value="ECO:0007669"/>
    <property type="project" value="TreeGrafter"/>
</dbReference>
<dbReference type="GO" id="GO:0003727">
    <property type="term" value="F:single-stranded RNA binding"/>
    <property type="evidence" value="ECO:0007669"/>
    <property type="project" value="TreeGrafter"/>
</dbReference>
<dbReference type="HAMAP" id="MF_00730">
    <property type="entry name" value="NdpA"/>
    <property type="match status" value="1"/>
</dbReference>
<dbReference type="InterPro" id="IPR007358">
    <property type="entry name" value="Nucleoid_associated_NdpA"/>
</dbReference>
<dbReference type="NCBIfam" id="NF001557">
    <property type="entry name" value="PRK00378.1"/>
    <property type="match status" value="1"/>
</dbReference>
<dbReference type="PANTHER" id="PTHR38772">
    <property type="match status" value="1"/>
</dbReference>
<dbReference type="PANTHER" id="PTHR38772:SF1">
    <property type="entry name" value="NUCLEOID-ASSOCIATED PROTEIN YEJK"/>
    <property type="match status" value="1"/>
</dbReference>
<dbReference type="Pfam" id="PF04245">
    <property type="entry name" value="NA37"/>
    <property type="match status" value="1"/>
</dbReference>
<evidence type="ECO:0000255" key="1">
    <source>
        <dbReference type="HAMAP-Rule" id="MF_00730"/>
    </source>
</evidence>